<feature type="chain" id="PRO_1000215812" description="Fe/S biogenesis protein NfuA">
    <location>
        <begin position="1"/>
        <end position="194"/>
    </location>
</feature>
<feature type="binding site" evidence="1">
    <location>
        <position position="152"/>
    </location>
    <ligand>
        <name>[4Fe-4S] cluster</name>
        <dbReference type="ChEBI" id="CHEBI:49883"/>
    </ligand>
</feature>
<feature type="binding site" evidence="1">
    <location>
        <position position="155"/>
    </location>
    <ligand>
        <name>[4Fe-4S] cluster</name>
        <dbReference type="ChEBI" id="CHEBI:49883"/>
    </ligand>
</feature>
<keyword id="KW-0004">4Fe-4S</keyword>
<keyword id="KW-0408">Iron</keyword>
<keyword id="KW-0411">Iron-sulfur</keyword>
<keyword id="KW-0479">Metal-binding</keyword>
<evidence type="ECO:0000255" key="1">
    <source>
        <dbReference type="HAMAP-Rule" id="MF_01637"/>
    </source>
</evidence>
<gene>
    <name evidence="1" type="primary">nfuA</name>
    <name type="ordered locus">Avin_28760</name>
</gene>
<reference key="1">
    <citation type="journal article" date="2009" name="J. Bacteriol.">
        <title>Genome sequence of Azotobacter vinelandii, an obligate aerobe specialized to support diverse anaerobic metabolic processes.</title>
        <authorList>
            <person name="Setubal J.C."/>
            <person name="Dos Santos P."/>
            <person name="Goldman B.S."/>
            <person name="Ertesvaag H."/>
            <person name="Espin G."/>
            <person name="Rubio L.M."/>
            <person name="Valla S."/>
            <person name="Almeida N.F."/>
            <person name="Balasubramanian D."/>
            <person name="Cromes L."/>
            <person name="Curatti L."/>
            <person name="Du Z."/>
            <person name="Godsy E."/>
            <person name="Goodner B."/>
            <person name="Hellner-Burris K."/>
            <person name="Hernandez J.A."/>
            <person name="Houmiel K."/>
            <person name="Imperial J."/>
            <person name="Kennedy C."/>
            <person name="Larson T.J."/>
            <person name="Latreille P."/>
            <person name="Ligon L.S."/>
            <person name="Lu J."/>
            <person name="Maerk M."/>
            <person name="Miller N.M."/>
            <person name="Norton S."/>
            <person name="O'Carroll I.P."/>
            <person name="Paulsen I."/>
            <person name="Raulfs E.C."/>
            <person name="Roemer R."/>
            <person name="Rosser J."/>
            <person name="Segura D."/>
            <person name="Slater S."/>
            <person name="Stricklin S.L."/>
            <person name="Studholme D.J."/>
            <person name="Sun J."/>
            <person name="Viana C.J."/>
            <person name="Wallin E."/>
            <person name="Wang B."/>
            <person name="Wheeler C."/>
            <person name="Zhu H."/>
            <person name="Dean D.R."/>
            <person name="Dixon R."/>
            <person name="Wood D."/>
        </authorList>
    </citation>
    <scope>NUCLEOTIDE SEQUENCE [LARGE SCALE GENOMIC DNA]</scope>
    <source>
        <strain>DJ / ATCC BAA-1303</strain>
    </source>
</reference>
<accession>C1DLW0</accession>
<name>NFUA_AZOVD</name>
<dbReference type="EMBL" id="CP001157">
    <property type="protein sequence ID" value="ACO79047.1"/>
    <property type="molecule type" value="Genomic_DNA"/>
</dbReference>
<dbReference type="RefSeq" id="WP_012701434.1">
    <property type="nucleotide sequence ID" value="NC_012560.1"/>
</dbReference>
<dbReference type="SMR" id="C1DLW0"/>
<dbReference type="STRING" id="322710.Avin_28760"/>
<dbReference type="EnsemblBacteria" id="ACO79047">
    <property type="protein sequence ID" value="ACO79047"/>
    <property type="gene ID" value="Avin_28760"/>
</dbReference>
<dbReference type="GeneID" id="88185985"/>
<dbReference type="KEGG" id="avn:Avin_28760"/>
<dbReference type="eggNOG" id="COG0316">
    <property type="taxonomic scope" value="Bacteria"/>
</dbReference>
<dbReference type="eggNOG" id="COG0694">
    <property type="taxonomic scope" value="Bacteria"/>
</dbReference>
<dbReference type="HOGENOM" id="CLU_094569_0_0_6"/>
<dbReference type="OrthoDB" id="9785450at2"/>
<dbReference type="Proteomes" id="UP000002424">
    <property type="component" value="Chromosome"/>
</dbReference>
<dbReference type="GO" id="GO:0051539">
    <property type="term" value="F:4 iron, 4 sulfur cluster binding"/>
    <property type="evidence" value="ECO:0007669"/>
    <property type="project" value="UniProtKB-UniRule"/>
</dbReference>
<dbReference type="GO" id="GO:0005506">
    <property type="term" value="F:iron ion binding"/>
    <property type="evidence" value="ECO:0007669"/>
    <property type="project" value="InterPro"/>
</dbReference>
<dbReference type="GO" id="GO:0016226">
    <property type="term" value="P:iron-sulfur cluster assembly"/>
    <property type="evidence" value="ECO:0007669"/>
    <property type="project" value="UniProtKB-UniRule"/>
</dbReference>
<dbReference type="GO" id="GO:0051604">
    <property type="term" value="P:protein maturation"/>
    <property type="evidence" value="ECO:0007669"/>
    <property type="project" value="UniProtKB-UniRule"/>
</dbReference>
<dbReference type="Gene3D" id="3.30.300.130">
    <property type="entry name" value="Fe-S cluster assembly (FSCA)"/>
    <property type="match status" value="1"/>
</dbReference>
<dbReference type="Gene3D" id="2.60.300.12">
    <property type="entry name" value="HesB-like domain"/>
    <property type="match status" value="1"/>
</dbReference>
<dbReference type="HAMAP" id="MF_01637">
    <property type="entry name" value="Fe_S_biogen_NfuA"/>
    <property type="match status" value="1"/>
</dbReference>
<dbReference type="InterPro" id="IPR017726">
    <property type="entry name" value="Fe/S_biogenesis_protein_NfuA"/>
</dbReference>
<dbReference type="InterPro" id="IPR000361">
    <property type="entry name" value="FeS_biogenesis"/>
</dbReference>
<dbReference type="InterPro" id="IPR034904">
    <property type="entry name" value="FSCA_dom_sf"/>
</dbReference>
<dbReference type="InterPro" id="IPR035903">
    <property type="entry name" value="HesB-like_dom_sf"/>
</dbReference>
<dbReference type="InterPro" id="IPR001075">
    <property type="entry name" value="NIF_FeS_clus_asmbl_NifU_C"/>
</dbReference>
<dbReference type="NCBIfam" id="TIGR03341">
    <property type="entry name" value="YhgI_GntY"/>
    <property type="match status" value="1"/>
</dbReference>
<dbReference type="PANTHER" id="PTHR11178:SF51">
    <property type="entry name" value="FE_S BIOGENESIS PROTEIN NFUA"/>
    <property type="match status" value="1"/>
</dbReference>
<dbReference type="PANTHER" id="PTHR11178">
    <property type="entry name" value="IRON-SULFUR CLUSTER SCAFFOLD PROTEIN NFU-RELATED"/>
    <property type="match status" value="1"/>
</dbReference>
<dbReference type="Pfam" id="PF01521">
    <property type="entry name" value="Fe-S_biosyn"/>
    <property type="match status" value="1"/>
</dbReference>
<dbReference type="Pfam" id="PF01106">
    <property type="entry name" value="NifU"/>
    <property type="match status" value="1"/>
</dbReference>
<dbReference type="SUPFAM" id="SSF117916">
    <property type="entry name" value="Fe-S cluster assembly (FSCA) domain-like"/>
    <property type="match status" value="1"/>
</dbReference>
<dbReference type="SUPFAM" id="SSF89360">
    <property type="entry name" value="HesB-like domain"/>
    <property type="match status" value="1"/>
</dbReference>
<protein>
    <recommendedName>
        <fullName evidence="1">Fe/S biogenesis protein NfuA</fullName>
    </recommendedName>
</protein>
<organism>
    <name type="scientific">Azotobacter vinelandii (strain DJ / ATCC BAA-1303)</name>
    <dbReference type="NCBI Taxonomy" id="322710"/>
    <lineage>
        <taxon>Bacteria</taxon>
        <taxon>Pseudomonadati</taxon>
        <taxon>Pseudomonadota</taxon>
        <taxon>Gammaproteobacteria</taxon>
        <taxon>Pseudomonadales</taxon>
        <taxon>Pseudomonadaceae</taxon>
        <taxon>Azotobacter</taxon>
    </lineage>
</organism>
<comment type="function">
    <text evidence="1">Involved in iron-sulfur cluster biogenesis. Binds a 4Fe-4S cluster, can transfer this cluster to apoproteins, and thereby intervenes in the maturation of Fe/S proteins. Could also act as a scaffold/chaperone for damaged Fe/S proteins.</text>
</comment>
<comment type="cofactor">
    <cofactor evidence="1">
        <name>[4Fe-4S] cluster</name>
        <dbReference type="ChEBI" id="CHEBI:49883"/>
    </cofactor>
    <text evidence="1">Binds 1 [4Fe-4S] cluster per subunit. The cluster is presumably bound at the interface of two monomers.</text>
</comment>
<comment type="subunit">
    <text evidence="1">Homodimer.</text>
</comment>
<comment type="similarity">
    <text evidence="1">Belongs to the NfuA family.</text>
</comment>
<sequence>MSAITITDAAHDYLAELLAKQNGTDIGIRIFITQPGTPAAETCLAYCKPHERHPDDIAQALKSFTLWIDAVSEPFLEDAIVDYANDRMGGQLTIKAPNAKVPMIDEDSPLGERINYYLQTEINPGLASHGGQVSLVDIVEEGIAVLRFGGGCQGCGMVDMTLKDGVEKTLLERIPDLKGVRDATDHSNRENAYY</sequence>
<proteinExistence type="inferred from homology"/>